<name>AMPA_ACIBC</name>
<protein>
    <recommendedName>
        <fullName evidence="1">Probable cytosol aminopeptidase</fullName>
        <ecNumber evidence="1">3.4.11.1</ecNumber>
    </recommendedName>
    <alternativeName>
        <fullName evidence="1">Leucine aminopeptidase</fullName>
        <shortName evidence="1">LAP</shortName>
        <ecNumber evidence="1">3.4.11.10</ecNumber>
    </alternativeName>
    <alternativeName>
        <fullName evidence="1">Leucyl aminopeptidase</fullName>
    </alternativeName>
</protein>
<dbReference type="EC" id="3.4.11.1" evidence="1"/>
<dbReference type="EC" id="3.4.11.10" evidence="1"/>
<dbReference type="EMBL" id="CP000863">
    <property type="protein sequence ID" value="ACC55564.1"/>
    <property type="molecule type" value="Genomic_DNA"/>
</dbReference>
<dbReference type="RefSeq" id="WP_000673449.1">
    <property type="nucleotide sequence ID" value="NZ_CP031380.1"/>
</dbReference>
<dbReference type="SMR" id="B2I1U0"/>
<dbReference type="MEROPS" id="M17.003"/>
<dbReference type="KEGG" id="abc:ACICU_00252"/>
<dbReference type="HOGENOM" id="CLU_013734_2_2_6"/>
<dbReference type="Proteomes" id="UP000008839">
    <property type="component" value="Chromosome"/>
</dbReference>
<dbReference type="GO" id="GO:0005737">
    <property type="term" value="C:cytoplasm"/>
    <property type="evidence" value="ECO:0007669"/>
    <property type="project" value="UniProtKB-SubCell"/>
</dbReference>
<dbReference type="GO" id="GO:0030145">
    <property type="term" value="F:manganese ion binding"/>
    <property type="evidence" value="ECO:0007669"/>
    <property type="project" value="UniProtKB-UniRule"/>
</dbReference>
<dbReference type="GO" id="GO:0070006">
    <property type="term" value="F:metalloaminopeptidase activity"/>
    <property type="evidence" value="ECO:0007669"/>
    <property type="project" value="InterPro"/>
</dbReference>
<dbReference type="GO" id="GO:0006508">
    <property type="term" value="P:proteolysis"/>
    <property type="evidence" value="ECO:0007669"/>
    <property type="project" value="UniProtKB-KW"/>
</dbReference>
<dbReference type="CDD" id="cd00433">
    <property type="entry name" value="Peptidase_M17"/>
    <property type="match status" value="1"/>
</dbReference>
<dbReference type="FunFam" id="3.40.630.10:FF:000004">
    <property type="entry name" value="Probable cytosol aminopeptidase"/>
    <property type="match status" value="1"/>
</dbReference>
<dbReference type="Gene3D" id="3.40.220.10">
    <property type="entry name" value="Leucine Aminopeptidase, subunit E, domain 1"/>
    <property type="match status" value="1"/>
</dbReference>
<dbReference type="Gene3D" id="3.40.630.10">
    <property type="entry name" value="Zn peptidases"/>
    <property type="match status" value="1"/>
</dbReference>
<dbReference type="HAMAP" id="MF_00181">
    <property type="entry name" value="Cytosol_peptidase_M17"/>
    <property type="match status" value="1"/>
</dbReference>
<dbReference type="InterPro" id="IPR011356">
    <property type="entry name" value="Leucine_aapep/pepB"/>
</dbReference>
<dbReference type="InterPro" id="IPR043472">
    <property type="entry name" value="Macro_dom-like"/>
</dbReference>
<dbReference type="InterPro" id="IPR000819">
    <property type="entry name" value="Peptidase_M17_C"/>
</dbReference>
<dbReference type="InterPro" id="IPR023042">
    <property type="entry name" value="Peptidase_M17_leu_NH2_pept"/>
</dbReference>
<dbReference type="InterPro" id="IPR008283">
    <property type="entry name" value="Peptidase_M17_N"/>
</dbReference>
<dbReference type="NCBIfam" id="NF002074">
    <property type="entry name" value="PRK00913.1-4"/>
    <property type="match status" value="1"/>
</dbReference>
<dbReference type="PANTHER" id="PTHR11963:SF23">
    <property type="entry name" value="CYTOSOL AMINOPEPTIDASE"/>
    <property type="match status" value="1"/>
</dbReference>
<dbReference type="PANTHER" id="PTHR11963">
    <property type="entry name" value="LEUCINE AMINOPEPTIDASE-RELATED"/>
    <property type="match status" value="1"/>
</dbReference>
<dbReference type="Pfam" id="PF00883">
    <property type="entry name" value="Peptidase_M17"/>
    <property type="match status" value="1"/>
</dbReference>
<dbReference type="Pfam" id="PF02789">
    <property type="entry name" value="Peptidase_M17_N"/>
    <property type="match status" value="1"/>
</dbReference>
<dbReference type="PRINTS" id="PR00481">
    <property type="entry name" value="LAMNOPPTDASE"/>
</dbReference>
<dbReference type="SUPFAM" id="SSF52949">
    <property type="entry name" value="Macro domain-like"/>
    <property type="match status" value="1"/>
</dbReference>
<dbReference type="SUPFAM" id="SSF53187">
    <property type="entry name" value="Zn-dependent exopeptidases"/>
    <property type="match status" value="1"/>
</dbReference>
<dbReference type="PROSITE" id="PS00631">
    <property type="entry name" value="CYTOSOL_AP"/>
    <property type="match status" value="1"/>
</dbReference>
<sequence length="482" mass="52177">MKFTTYTTFPEQTSNESLWILVDSEQLQSNLNTYQINNLESILTATQFKANFNETLPLFGQLSTQPHSQLLGLGKAAELQAAKLAKLAQTIIKSAQNKFKHIAIDIAALPVEYHYLFALSLTQAAYGYDEFKSKKNEFVLQQVDLISSQTSLDENQLALVHAVQSGQSYARDLGNRPGNICFPEYLAEQALALAAEFPDLLKVTVLNEQQMADLGMYAFLAVSKGSERPGRIVTLEYQAQLEQAPVVLVGKGVTFDTGGISLKPGLGMDEMKFDMCGAASVLGTIRALCEARLPIHVVGAIAAAENMPSGKATRPGDIVTTMSGQTVEILNTDAEGRLVLCDTLTYIKRFNPAVVIDIATLTGACVVALGKVLSGLFSPDDTLAAELQQAGEQSFDRVWRMPVIDDYQELLDSPFADIANIGGPHGGAITAACFLERFTRDYRWAHLDVAGTAWLSGSAKGATGRPVPLLMQFLANRVSTNG</sequence>
<gene>
    <name evidence="1" type="primary">pepA</name>
    <name type="ordered locus">ACICU_00252</name>
</gene>
<feature type="chain" id="PRO_1000098296" description="Probable cytosol aminopeptidase">
    <location>
        <begin position="1"/>
        <end position="482"/>
    </location>
</feature>
<feature type="active site" evidence="1">
    <location>
        <position position="263"/>
    </location>
</feature>
<feature type="active site" evidence="1">
    <location>
        <position position="337"/>
    </location>
</feature>
<feature type="binding site" evidence="1">
    <location>
        <position position="251"/>
    </location>
    <ligand>
        <name>Mn(2+)</name>
        <dbReference type="ChEBI" id="CHEBI:29035"/>
        <label>2</label>
    </ligand>
</feature>
<feature type="binding site" evidence="1">
    <location>
        <position position="256"/>
    </location>
    <ligand>
        <name>Mn(2+)</name>
        <dbReference type="ChEBI" id="CHEBI:29035"/>
        <label>1</label>
    </ligand>
</feature>
<feature type="binding site" evidence="1">
    <location>
        <position position="256"/>
    </location>
    <ligand>
        <name>Mn(2+)</name>
        <dbReference type="ChEBI" id="CHEBI:29035"/>
        <label>2</label>
    </ligand>
</feature>
<feature type="binding site" evidence="1">
    <location>
        <position position="274"/>
    </location>
    <ligand>
        <name>Mn(2+)</name>
        <dbReference type="ChEBI" id="CHEBI:29035"/>
        <label>2</label>
    </ligand>
</feature>
<feature type="binding site" evidence="1">
    <location>
        <position position="333"/>
    </location>
    <ligand>
        <name>Mn(2+)</name>
        <dbReference type="ChEBI" id="CHEBI:29035"/>
        <label>1</label>
    </ligand>
</feature>
<feature type="binding site" evidence="1">
    <location>
        <position position="335"/>
    </location>
    <ligand>
        <name>Mn(2+)</name>
        <dbReference type="ChEBI" id="CHEBI:29035"/>
        <label>1</label>
    </ligand>
</feature>
<feature type="binding site" evidence="1">
    <location>
        <position position="335"/>
    </location>
    <ligand>
        <name>Mn(2+)</name>
        <dbReference type="ChEBI" id="CHEBI:29035"/>
        <label>2</label>
    </ligand>
</feature>
<keyword id="KW-0031">Aminopeptidase</keyword>
<keyword id="KW-0963">Cytoplasm</keyword>
<keyword id="KW-0378">Hydrolase</keyword>
<keyword id="KW-0464">Manganese</keyword>
<keyword id="KW-0479">Metal-binding</keyword>
<keyword id="KW-0645">Protease</keyword>
<evidence type="ECO:0000255" key="1">
    <source>
        <dbReference type="HAMAP-Rule" id="MF_00181"/>
    </source>
</evidence>
<comment type="function">
    <text evidence="1">Presumably involved in the processing and regular turnover of intracellular proteins. Catalyzes the removal of unsubstituted N-terminal amino acids from various peptides.</text>
</comment>
<comment type="catalytic activity">
    <reaction evidence="1">
        <text>Release of an N-terminal amino acid, Xaa-|-Yaa-, in which Xaa is preferably Leu, but may be other amino acids including Pro although not Arg or Lys, and Yaa may be Pro. Amino acid amides and methyl esters are also readily hydrolyzed, but rates on arylamides are exceedingly low.</text>
        <dbReference type="EC" id="3.4.11.1"/>
    </reaction>
</comment>
<comment type="catalytic activity">
    <reaction evidence="1">
        <text>Release of an N-terminal amino acid, preferentially leucine, but not glutamic or aspartic acids.</text>
        <dbReference type="EC" id="3.4.11.10"/>
    </reaction>
</comment>
<comment type="cofactor">
    <cofactor evidence="1">
        <name>Mn(2+)</name>
        <dbReference type="ChEBI" id="CHEBI:29035"/>
    </cofactor>
    <text evidence="1">Binds 2 manganese ions per subunit.</text>
</comment>
<comment type="subcellular location">
    <subcellularLocation>
        <location evidence="1">Cytoplasm</location>
    </subcellularLocation>
</comment>
<comment type="similarity">
    <text evidence="1">Belongs to the peptidase M17 family.</text>
</comment>
<reference key="1">
    <citation type="journal article" date="2008" name="Antimicrob. Agents Chemother.">
        <title>Whole-genome pyrosequencing of an epidemic multidrug-resistant Acinetobacter baumannii strain belonging to the European clone II group.</title>
        <authorList>
            <person name="Iacono M."/>
            <person name="Villa L."/>
            <person name="Fortini D."/>
            <person name="Bordoni R."/>
            <person name="Imperi F."/>
            <person name="Bonnal R.J."/>
            <person name="Sicheritz-Ponten T."/>
            <person name="De Bellis G."/>
            <person name="Visca P."/>
            <person name="Cassone A."/>
            <person name="Carattoli A."/>
        </authorList>
    </citation>
    <scope>NUCLEOTIDE SEQUENCE [LARGE SCALE GENOMIC DNA]</scope>
    <source>
        <strain>ACICU</strain>
    </source>
</reference>
<accession>B2I1U0</accession>
<organism>
    <name type="scientific">Acinetobacter baumannii (strain ACICU)</name>
    <dbReference type="NCBI Taxonomy" id="405416"/>
    <lineage>
        <taxon>Bacteria</taxon>
        <taxon>Pseudomonadati</taxon>
        <taxon>Pseudomonadota</taxon>
        <taxon>Gammaproteobacteria</taxon>
        <taxon>Moraxellales</taxon>
        <taxon>Moraxellaceae</taxon>
        <taxon>Acinetobacter</taxon>
        <taxon>Acinetobacter calcoaceticus/baumannii complex</taxon>
    </lineage>
</organism>
<proteinExistence type="inferred from homology"/>